<keyword id="KW-0027">Amidation</keyword>
<keyword id="KW-0044">Antibiotic</keyword>
<keyword id="KW-0929">Antimicrobial</keyword>
<keyword id="KW-0391">Immunity</keyword>
<keyword id="KW-0399">Innate immunity</keyword>
<keyword id="KW-1185">Reference proteome</keyword>
<keyword id="KW-0964">Secreted</keyword>
<keyword id="KW-0732">Signal</keyword>
<comment type="function">
    <text>Cecropins have lytic and antibacterial activity against several Gram-positive and Gram-negative bacteria.</text>
</comment>
<comment type="subcellular location">
    <subcellularLocation>
        <location>Secreted</location>
    </subcellularLocation>
</comment>
<comment type="similarity">
    <text evidence="2">Belongs to the cecropin family.</text>
</comment>
<accession>P84021</accession>
<accession>B4R1K4</accession>
<accession>O16837</accession>
<accession>P29561</accession>
<accession>Q9VA89</accession>
<sequence>MNFYKIFVFVALILAISIGQSEAGWLKKLGKRIERIGQHTRDATIQGLGIAQQAANVAATARG</sequence>
<organism>
    <name type="scientific">Drosophila simulans</name>
    <name type="common">Fruit fly</name>
    <dbReference type="NCBI Taxonomy" id="7240"/>
    <lineage>
        <taxon>Eukaryota</taxon>
        <taxon>Metazoa</taxon>
        <taxon>Ecdysozoa</taxon>
        <taxon>Arthropoda</taxon>
        <taxon>Hexapoda</taxon>
        <taxon>Insecta</taxon>
        <taxon>Pterygota</taxon>
        <taxon>Neoptera</taxon>
        <taxon>Endopterygota</taxon>
        <taxon>Diptera</taxon>
        <taxon>Brachycera</taxon>
        <taxon>Muscomorpha</taxon>
        <taxon>Ephydroidea</taxon>
        <taxon>Drosophilidae</taxon>
        <taxon>Drosophila</taxon>
        <taxon>Sophophora</taxon>
    </lineage>
</organism>
<proteinExistence type="inferred from homology"/>
<evidence type="ECO:0000250" key="1"/>
<evidence type="ECO:0000305" key="2"/>
<name>CECC_DROSI</name>
<reference key="1">
    <citation type="journal article" date="2002" name="J. Mol. Evol.">
        <title>Rapid evolution of the male-specific antibacterial protein andropin gene in Drosophila.</title>
        <authorList>
            <person name="Date-Ito A."/>
            <person name="Kasahara K."/>
            <person name="Sawai H."/>
            <person name="Chigusa S.I."/>
        </authorList>
    </citation>
    <scope>NUCLEOTIDE SEQUENCE [GENOMIC DNA]</scope>
    <source>
        <strain>S1</strain>
        <strain>S2</strain>
    </source>
</reference>
<reference key="2">
    <citation type="journal article" date="2007" name="Nature">
        <title>Evolution of genes and genomes on the Drosophila phylogeny.</title>
        <authorList>
            <consortium name="Drosophila 12 genomes consortium"/>
        </authorList>
    </citation>
    <scope>NUCLEOTIDE SEQUENCE [LARGE SCALE GENOMIC DNA]</scope>
</reference>
<protein>
    <recommendedName>
        <fullName>Cecropin-C</fullName>
    </recommendedName>
</protein>
<gene>
    <name type="primary">CecC</name>
    <name type="ORF">GD21509</name>
</gene>
<feature type="signal peptide">
    <location>
        <begin position="1"/>
        <end position="23"/>
    </location>
</feature>
<feature type="chain" id="PRO_0000004852" description="Cecropin-C">
    <location>
        <begin position="24"/>
        <end position="62"/>
    </location>
</feature>
<feature type="modified residue" description="Arginine amide" evidence="1">
    <location>
        <position position="62"/>
    </location>
</feature>
<dbReference type="EMBL" id="AB047055">
    <property type="protein sequence ID" value="BAB78560.1"/>
    <property type="molecule type" value="Genomic_DNA"/>
</dbReference>
<dbReference type="EMBL" id="AB047056">
    <property type="protein sequence ID" value="BAB78561.1"/>
    <property type="molecule type" value="Genomic_DNA"/>
</dbReference>
<dbReference type="EMBL" id="CM000364">
    <property type="protein sequence ID" value="EDX14992.1"/>
    <property type="molecule type" value="Genomic_DNA"/>
</dbReference>
<dbReference type="SMR" id="P84021"/>
<dbReference type="STRING" id="7240.P84021"/>
<dbReference type="EnsemblMetazoa" id="FBtr0221419">
    <property type="protein sequence ID" value="FBpp0219911"/>
    <property type="gene ID" value="FBgn0046915"/>
</dbReference>
<dbReference type="EnsemblMetazoa" id="XM_002105453.4">
    <property type="protein sequence ID" value="XP_002105489.1"/>
    <property type="gene ID" value="LOC6730204"/>
</dbReference>
<dbReference type="GeneID" id="6730204"/>
<dbReference type="KEGG" id="dsi:Dsimw501_GD21509"/>
<dbReference type="HOGENOM" id="CLU_187909_1_0_1"/>
<dbReference type="OMA" id="IAICNVQ"/>
<dbReference type="OrthoDB" id="7410372at2759"/>
<dbReference type="PhylomeDB" id="P84021"/>
<dbReference type="ChiTaRS" id="CecC">
    <property type="organism name" value="fly"/>
</dbReference>
<dbReference type="Proteomes" id="UP000000304">
    <property type="component" value="Chromosome 3R"/>
</dbReference>
<dbReference type="Bgee" id="FBgn0046915">
    <property type="expression patterns" value="Expressed in adult organism and 2 other cell types or tissues"/>
</dbReference>
<dbReference type="GO" id="GO:0005576">
    <property type="term" value="C:extracellular region"/>
    <property type="evidence" value="ECO:0000250"/>
    <property type="project" value="UniProtKB"/>
</dbReference>
<dbReference type="GO" id="GO:0005615">
    <property type="term" value="C:extracellular space"/>
    <property type="evidence" value="ECO:0007669"/>
    <property type="project" value="EnsemblMetazoa"/>
</dbReference>
<dbReference type="GO" id="GO:0019731">
    <property type="term" value="P:antibacterial humoral response"/>
    <property type="evidence" value="ECO:0007669"/>
    <property type="project" value="EnsemblMetazoa"/>
</dbReference>
<dbReference type="GO" id="GO:0050829">
    <property type="term" value="P:defense response to Gram-negative bacterium"/>
    <property type="evidence" value="ECO:0000250"/>
    <property type="project" value="UniProtKB"/>
</dbReference>
<dbReference type="GO" id="GO:0050830">
    <property type="term" value="P:defense response to Gram-positive bacterium"/>
    <property type="evidence" value="ECO:0000250"/>
    <property type="project" value="UniProtKB"/>
</dbReference>
<dbReference type="GO" id="GO:0051607">
    <property type="term" value="P:defense response to virus"/>
    <property type="evidence" value="ECO:0007669"/>
    <property type="project" value="EnsemblMetazoa"/>
</dbReference>
<dbReference type="GO" id="GO:0045087">
    <property type="term" value="P:innate immune response"/>
    <property type="evidence" value="ECO:0007669"/>
    <property type="project" value="UniProtKB-KW"/>
</dbReference>
<dbReference type="GO" id="GO:0140460">
    <property type="term" value="P:response to Gram-negative bacterium"/>
    <property type="evidence" value="ECO:0007669"/>
    <property type="project" value="EnsemblMetazoa"/>
</dbReference>
<dbReference type="InterPro" id="IPR000875">
    <property type="entry name" value="Cecropin"/>
</dbReference>
<dbReference type="InterPro" id="IPR020400">
    <property type="entry name" value="Cecropin_insect"/>
</dbReference>
<dbReference type="PANTHER" id="PTHR38329">
    <property type="entry name" value="CECROPIN-A1-RELATED"/>
    <property type="match status" value="1"/>
</dbReference>
<dbReference type="PANTHER" id="PTHR38329:SF1">
    <property type="entry name" value="CECROPIN-A1-RELATED"/>
    <property type="match status" value="1"/>
</dbReference>
<dbReference type="Pfam" id="PF00272">
    <property type="entry name" value="Cecropin"/>
    <property type="match status" value="1"/>
</dbReference>
<dbReference type="PROSITE" id="PS00268">
    <property type="entry name" value="CECROPIN"/>
    <property type="match status" value="1"/>
</dbReference>